<sequence>MSRVNATMFDDMDIPRGRFGKPPRKITNVNFWHVVVDEFTEGIVQCMEARERLGLLCTISTNEGSITSFDIHKDMWCQMVIWSAYRFFAMMDKMFSIETITNFTETDLTETGQWRIFYRTWDVRDALKMKQVGPFLPALFSFHLENWTTMLSIGINKGYDRHNTRNMFMTIQSARNVLSGAMEVARYAVVLALPVCEYRTPLGLPDDSIGNAIKTCCTQMQANRLTETGISKDSGHKINDSSEEELYYRTIHDLIKPNREHCISCNIENSMDIDPTIHHRSSNVITLQGTSTYPFGRRPMSRMDVGGLMYQHPYICRNLHLRPPRSRLMNSKILQTFRQSFNRSNPHAYPI</sequence>
<organismHost>
    <name type="scientific">Gallus gallus</name>
    <name type="common">Chicken</name>
    <dbReference type="NCBI Taxonomy" id="9031"/>
</organismHost>
<accession>Q9E6M0</accession>
<dbReference type="EMBL" id="AF243438">
    <property type="protein sequence ID" value="AAG14264.1"/>
    <property type="molecule type" value="Genomic_DNA"/>
</dbReference>
<dbReference type="RefSeq" id="YP_001034007.1">
    <property type="nucleotide sequence ID" value="NC_002229.3"/>
</dbReference>
<dbReference type="GeneID" id="4811449"/>
<dbReference type="KEGG" id="vg:4811449"/>
<dbReference type="Proteomes" id="UP000008072">
    <property type="component" value="Segment"/>
</dbReference>
<dbReference type="InterPro" id="IPR009823">
    <property type="entry name" value="Herpes_SORF3"/>
</dbReference>
<dbReference type="Pfam" id="PF07153">
    <property type="entry name" value="Marek_SORF3"/>
    <property type="match status" value="1"/>
</dbReference>
<keyword id="KW-1185">Reference proteome</keyword>
<organism>
    <name type="scientific">Gallid herpesvirus 2 (strain Chicken/Md5/ATCC VR-987)</name>
    <name type="common">GaHV-2</name>
    <name type="synonym">Marek's disease herpesvirus type 1</name>
    <dbReference type="NCBI Taxonomy" id="10389"/>
    <lineage>
        <taxon>Viruses</taxon>
        <taxon>Duplodnaviria</taxon>
        <taxon>Heunggongvirae</taxon>
        <taxon>Peploviricota</taxon>
        <taxon>Herviviricetes</taxon>
        <taxon>Herpesvirales</taxon>
        <taxon>Orthoherpesviridae</taxon>
        <taxon>Alphaherpesvirinae</taxon>
        <taxon>Mardivirus</taxon>
        <taxon>Mardivirus gallidalpha2</taxon>
        <taxon>Gallid alphaherpesvirus 2</taxon>
    </lineage>
</organism>
<protein>
    <recommendedName>
        <fullName>Uncharacterized gene 90 protein</fullName>
    </recommendedName>
</protein>
<proteinExistence type="predicted"/>
<name>VG90_GAHVM</name>
<feature type="chain" id="PRO_0000406517" description="Uncharacterized gene 90 protein">
    <location>
        <begin position="1"/>
        <end position="351"/>
    </location>
</feature>
<gene>
    <name type="primary">MDV090</name>
</gene>
<reference key="1">
    <citation type="journal article" date="2000" name="J. Virol.">
        <title>The genome of a very virulent Marek's disease virus.</title>
        <authorList>
            <person name="Tulman E.R."/>
            <person name="Afonso C.L."/>
            <person name="Lu Z."/>
            <person name="Zsak L."/>
            <person name="Rock D.L."/>
            <person name="Kutish G.F."/>
        </authorList>
    </citation>
    <scope>NUCLEOTIDE SEQUENCE [LARGE SCALE GENOMIC DNA]</scope>
</reference>